<feature type="initiator methionine" description="Removed" evidence="1">
    <location>
        <position position="1"/>
    </location>
</feature>
<feature type="chain" id="PRO_0000186536" description="PTS system glucose-specific EIIA component">
    <location>
        <begin position="2"/>
        <end position="169"/>
    </location>
</feature>
<feature type="domain" description="PTS EIIA type-1" evidence="2">
    <location>
        <begin position="39"/>
        <end position="143"/>
    </location>
</feature>
<feature type="active site" description="Tele-phosphohistidine intermediate; for EIIA activity" evidence="1 2">
    <location>
        <position position="91"/>
    </location>
</feature>
<feature type="binding site" evidence="1">
    <location>
        <position position="76"/>
    </location>
    <ligand>
        <name>Zn(2+)</name>
        <dbReference type="ChEBI" id="CHEBI:29105"/>
        <note>ligand shared with glycerol kinase</note>
    </ligand>
</feature>
<feature type="binding site" evidence="1">
    <location>
        <position position="91"/>
    </location>
    <ligand>
        <name>Zn(2+)</name>
        <dbReference type="ChEBI" id="CHEBI:29105"/>
        <note>ligand shared with glycerol kinase</note>
    </ligand>
</feature>
<feature type="site" description="Important for phospho-donor activity" evidence="1">
    <location>
        <position position="76"/>
    </location>
</feature>
<feature type="modified residue" description="Phosphohistidine; by HPr" evidence="1">
    <location>
        <position position="91"/>
    </location>
</feature>
<sequence>MGLFDKLKSLVSDDKKDTGTIEIIAPLSGEIVNIEDVPDVVFAEKIVGDGIAIKPTGNKMVAPVDGTIGKIFETNHAFSIESDSGVELFVHFGIDTVELKGEGFKRIAEEGQRVKVGDTVIEFDLPLLEEKAKSTLTPVVISNMDEIKELIKLSGSVTVGETPVIRIKK</sequence>
<name>PTGA_SHIFL</name>
<proteinExistence type="inferred from homology"/>
<accession>P69785</accession>
<accession>P08837</accession>
<accession>Q47703</accession>
<reference key="1">
    <citation type="journal article" date="2002" name="Nucleic Acids Res.">
        <title>Genome sequence of Shigella flexneri 2a: insights into pathogenicity through comparison with genomes of Escherichia coli K12 and O157.</title>
        <authorList>
            <person name="Jin Q."/>
            <person name="Yuan Z."/>
            <person name="Xu J."/>
            <person name="Wang Y."/>
            <person name="Shen Y."/>
            <person name="Lu W."/>
            <person name="Wang J."/>
            <person name="Liu H."/>
            <person name="Yang J."/>
            <person name="Yang F."/>
            <person name="Zhang X."/>
            <person name="Zhang J."/>
            <person name="Yang G."/>
            <person name="Wu H."/>
            <person name="Qu D."/>
            <person name="Dong J."/>
            <person name="Sun L."/>
            <person name="Xue Y."/>
            <person name="Zhao A."/>
            <person name="Gao Y."/>
            <person name="Zhu J."/>
            <person name="Kan B."/>
            <person name="Ding K."/>
            <person name="Chen S."/>
            <person name="Cheng H."/>
            <person name="Yao Z."/>
            <person name="He B."/>
            <person name="Chen R."/>
            <person name="Ma D."/>
            <person name="Qiang B."/>
            <person name="Wen Y."/>
            <person name="Hou Y."/>
            <person name="Yu J."/>
        </authorList>
    </citation>
    <scope>NUCLEOTIDE SEQUENCE [LARGE SCALE GENOMIC DNA]</scope>
    <source>
        <strain>301 / Serotype 2a</strain>
    </source>
</reference>
<reference key="2">
    <citation type="journal article" date="2003" name="Infect. Immun.">
        <title>Complete genome sequence and comparative genomics of Shigella flexneri serotype 2a strain 2457T.</title>
        <authorList>
            <person name="Wei J."/>
            <person name="Goldberg M.B."/>
            <person name="Burland V."/>
            <person name="Venkatesan M.M."/>
            <person name="Deng W."/>
            <person name="Fournier G."/>
            <person name="Mayhew G.F."/>
            <person name="Plunkett G. III"/>
            <person name="Rose D.J."/>
            <person name="Darling A."/>
            <person name="Mau B."/>
            <person name="Perna N.T."/>
            <person name="Payne S.M."/>
            <person name="Runyen-Janecky L.J."/>
            <person name="Zhou S."/>
            <person name="Schwartz D.C."/>
            <person name="Blattner F.R."/>
        </authorList>
    </citation>
    <scope>NUCLEOTIDE SEQUENCE [LARGE SCALE GENOMIC DNA]</scope>
    <source>
        <strain>ATCC 700930 / 2457T / Serotype 2a</strain>
    </source>
</reference>
<gene>
    <name type="primary">crr</name>
    <name type="ordered locus">SF2472</name>
    <name type="ordered locus">S2618</name>
</gene>
<organism>
    <name type="scientific">Shigella flexneri</name>
    <dbReference type="NCBI Taxonomy" id="623"/>
    <lineage>
        <taxon>Bacteria</taxon>
        <taxon>Pseudomonadati</taxon>
        <taxon>Pseudomonadota</taxon>
        <taxon>Gammaproteobacteria</taxon>
        <taxon>Enterobacterales</taxon>
        <taxon>Enterobacteriaceae</taxon>
        <taxon>Shigella</taxon>
    </lineage>
</organism>
<keyword id="KW-0963">Cytoplasm</keyword>
<keyword id="KW-0418">Kinase</keyword>
<keyword id="KW-0479">Metal-binding</keyword>
<keyword id="KW-0597">Phosphoprotein</keyword>
<keyword id="KW-0598">Phosphotransferase system</keyword>
<keyword id="KW-1185">Reference proteome</keyword>
<keyword id="KW-0762">Sugar transport</keyword>
<keyword id="KW-0808">Transferase</keyword>
<keyword id="KW-0813">Transport</keyword>
<keyword id="KW-0862">Zinc</keyword>
<protein>
    <recommendedName>
        <fullName evidence="1">PTS system glucose-specific EIIA component</fullName>
    </recommendedName>
    <alternativeName>
        <fullName evidence="1">EIIA-Glc</fullName>
    </alternativeName>
    <alternativeName>
        <fullName evidence="1">EIII-Glc</fullName>
    </alternativeName>
    <alternativeName>
        <fullName evidence="1">Glucose-specific phosphotransferase enzyme IIA component</fullName>
    </alternativeName>
</protein>
<comment type="function">
    <text evidence="1">The phosphoenolpyruvate-dependent sugar phosphotransferase system (sugar PTS), a major carbohydrate active transport system, catalyzes the phosphorylation of incoming sugar substrates concomitantly with their translocation across the cell membrane. The enzyme II complex composed of PtsG and Crr is involved in glucose transport.</text>
</comment>
<comment type="cofactor">
    <cofactor evidence="1">
        <name>Zn(2+)</name>
        <dbReference type="ChEBI" id="CHEBI:29105"/>
    </cofactor>
    <text evidence="1">Binds 1 zinc ion per glycerol kinase EIIA-Glc dimer. The zinc ion is important for dimerization.</text>
</comment>
<comment type="subunit">
    <text evidence="1">Heterodimer with glycerol kinase (glpk).</text>
</comment>
<comment type="subcellular location">
    <subcellularLocation>
        <location evidence="3">Cytoplasm</location>
    </subcellularLocation>
</comment>
<comment type="domain">
    <text evidence="2">The EIIA domain is phosphorylated by phospho-HPr on a histidyl residue. Then, it transfers the phosphoryl group to the EIIB domain.</text>
</comment>
<evidence type="ECO:0000250" key="1">
    <source>
        <dbReference type="UniProtKB" id="P69783"/>
    </source>
</evidence>
<evidence type="ECO:0000255" key="2">
    <source>
        <dbReference type="PROSITE-ProRule" id="PRU00416"/>
    </source>
</evidence>
<evidence type="ECO:0000305" key="3"/>
<dbReference type="EMBL" id="AE005674">
    <property type="protein sequence ID" value="AAN43979.1"/>
    <property type="molecule type" value="Genomic_DNA"/>
</dbReference>
<dbReference type="EMBL" id="AE014073">
    <property type="protein sequence ID" value="AAP17792.1"/>
    <property type="molecule type" value="Genomic_DNA"/>
</dbReference>
<dbReference type="RefSeq" id="NP_708272.1">
    <property type="nucleotide sequence ID" value="NC_004337.2"/>
</dbReference>
<dbReference type="RefSeq" id="WP_000522247.1">
    <property type="nucleotide sequence ID" value="NZ_WPGW01000027.1"/>
</dbReference>
<dbReference type="BMRB" id="P69785"/>
<dbReference type="SMR" id="P69785"/>
<dbReference type="STRING" id="198214.SF2472"/>
<dbReference type="PaxDb" id="198214-SF2472"/>
<dbReference type="GeneID" id="1027210"/>
<dbReference type="GeneID" id="93774714"/>
<dbReference type="KEGG" id="sfl:SF2472"/>
<dbReference type="KEGG" id="sfx:S2618"/>
<dbReference type="PATRIC" id="fig|198214.7.peg.2953"/>
<dbReference type="HOGENOM" id="CLU_012312_5_1_6"/>
<dbReference type="Proteomes" id="UP000001006">
    <property type="component" value="Chromosome"/>
</dbReference>
<dbReference type="Proteomes" id="UP000002673">
    <property type="component" value="Chromosome"/>
</dbReference>
<dbReference type="GO" id="GO:0005737">
    <property type="term" value="C:cytoplasm"/>
    <property type="evidence" value="ECO:0007669"/>
    <property type="project" value="UniProtKB-SubCell"/>
</dbReference>
<dbReference type="GO" id="GO:0016301">
    <property type="term" value="F:kinase activity"/>
    <property type="evidence" value="ECO:0007669"/>
    <property type="project" value="UniProtKB-KW"/>
</dbReference>
<dbReference type="GO" id="GO:0046872">
    <property type="term" value="F:metal ion binding"/>
    <property type="evidence" value="ECO:0007669"/>
    <property type="project" value="UniProtKB-KW"/>
</dbReference>
<dbReference type="GO" id="GO:0009401">
    <property type="term" value="P:phosphoenolpyruvate-dependent sugar phosphotransferase system"/>
    <property type="evidence" value="ECO:0007669"/>
    <property type="project" value="UniProtKB-KW"/>
</dbReference>
<dbReference type="CDD" id="cd00210">
    <property type="entry name" value="PTS_IIA_glc"/>
    <property type="match status" value="1"/>
</dbReference>
<dbReference type="FunFam" id="2.70.70.10:FF:000001">
    <property type="entry name" value="PTS system glucose-specific IIA component"/>
    <property type="match status" value="1"/>
</dbReference>
<dbReference type="Gene3D" id="2.70.70.10">
    <property type="entry name" value="Glucose Permease (Domain IIA)"/>
    <property type="match status" value="1"/>
</dbReference>
<dbReference type="InterPro" id="IPR011055">
    <property type="entry name" value="Dup_hybrid_motif"/>
</dbReference>
<dbReference type="InterPro" id="IPR001127">
    <property type="entry name" value="PTS_EIIA_1_perm"/>
</dbReference>
<dbReference type="InterPro" id="IPR050890">
    <property type="entry name" value="PTS_EIIA_component"/>
</dbReference>
<dbReference type="NCBIfam" id="NF006962">
    <property type="entry name" value="PRK09439.1"/>
    <property type="match status" value="1"/>
</dbReference>
<dbReference type="NCBIfam" id="TIGR00830">
    <property type="entry name" value="PTBA"/>
    <property type="match status" value="1"/>
</dbReference>
<dbReference type="PANTHER" id="PTHR45008">
    <property type="entry name" value="PTS SYSTEM GLUCOSE-SPECIFIC EIIA COMPONENT"/>
    <property type="match status" value="1"/>
</dbReference>
<dbReference type="PANTHER" id="PTHR45008:SF1">
    <property type="entry name" value="PTS SYSTEM GLUCOSE-SPECIFIC EIIA COMPONENT"/>
    <property type="match status" value="1"/>
</dbReference>
<dbReference type="Pfam" id="PF00358">
    <property type="entry name" value="PTS_EIIA_1"/>
    <property type="match status" value="1"/>
</dbReference>
<dbReference type="SUPFAM" id="SSF51261">
    <property type="entry name" value="Duplicated hybrid motif"/>
    <property type="match status" value="1"/>
</dbReference>
<dbReference type="PROSITE" id="PS51093">
    <property type="entry name" value="PTS_EIIA_TYPE_1"/>
    <property type="match status" value="1"/>
</dbReference>
<dbReference type="PROSITE" id="PS00371">
    <property type="entry name" value="PTS_EIIA_TYPE_1_HIS"/>
    <property type="match status" value="1"/>
</dbReference>